<feature type="chain" id="PRO_1000012778" description="ATP-dependent protease ATPase subunit HslU">
    <location>
        <begin position="1"/>
        <end position="445"/>
    </location>
</feature>
<feature type="binding site" evidence="1">
    <location>
        <position position="17"/>
    </location>
    <ligand>
        <name>ATP</name>
        <dbReference type="ChEBI" id="CHEBI:30616"/>
    </ligand>
</feature>
<feature type="binding site" evidence="1">
    <location>
        <begin position="59"/>
        <end position="64"/>
    </location>
    <ligand>
        <name>ATP</name>
        <dbReference type="ChEBI" id="CHEBI:30616"/>
    </ligand>
</feature>
<feature type="binding site" evidence="1">
    <location>
        <position position="254"/>
    </location>
    <ligand>
        <name>ATP</name>
        <dbReference type="ChEBI" id="CHEBI:30616"/>
    </ligand>
</feature>
<feature type="binding site" evidence="1">
    <location>
        <position position="319"/>
    </location>
    <ligand>
        <name>ATP</name>
        <dbReference type="ChEBI" id="CHEBI:30616"/>
    </ligand>
</feature>
<feature type="binding site" evidence="1">
    <location>
        <position position="391"/>
    </location>
    <ligand>
        <name>ATP</name>
        <dbReference type="ChEBI" id="CHEBI:30616"/>
    </ligand>
</feature>
<keyword id="KW-0067">ATP-binding</keyword>
<keyword id="KW-0143">Chaperone</keyword>
<keyword id="KW-0963">Cytoplasm</keyword>
<keyword id="KW-0547">Nucleotide-binding</keyword>
<keyword id="KW-0346">Stress response</keyword>
<evidence type="ECO:0000255" key="1">
    <source>
        <dbReference type="HAMAP-Rule" id="MF_00249"/>
    </source>
</evidence>
<sequence>MSMTPREIVHELNRHIIGQDDAKRAVAIALRNRWRRMQLPEELRVEVTPKNILMIGPTGVGKTEIARRLAKLANAPFIKVEATKFTEVGYVGRDVESIIRDLADAAIKMLREQEMTRVRHRAEDAAEDRILDALLPPARMGFSNEEAPTQDSNTRQLFRKRLREGQLDDKEIEIEVAEMAGIEIATPPGMEEMTNQLQNLFANMGKGKKKARKLKVKEALKLVRDEEAGRLVNEEELKAKALEAVEQHGIVFIDEIDKVAKRGNVGGADVSREGVQRDLLPLIEGCTVNTKLGMVKTDHILFIASGAFHLSKPSDLVPELQGRLPIRVELKALSPQDFERILSEPHASLTEQYCALLKTEGLNIQFQPEGIKRLAEIAWQVNEKTENIGARRLHTLLERLLEEVSFSAGDLASAHDDKAIQIDAEYVNSHLGELAQNEDLSRYIL</sequence>
<reference key="1">
    <citation type="journal article" date="2009" name="Genome Biol.">
        <title>Genomic and genetic analyses of diversity and plant interactions of Pseudomonas fluorescens.</title>
        <authorList>
            <person name="Silby M.W."/>
            <person name="Cerdeno-Tarraga A.M."/>
            <person name="Vernikos G.S."/>
            <person name="Giddens S.R."/>
            <person name="Jackson R.W."/>
            <person name="Preston G.M."/>
            <person name="Zhang X.-X."/>
            <person name="Moon C.D."/>
            <person name="Gehrig S.M."/>
            <person name="Godfrey S.A.C."/>
            <person name="Knight C.G."/>
            <person name="Malone J.G."/>
            <person name="Robinson Z."/>
            <person name="Spiers A.J."/>
            <person name="Harris S."/>
            <person name="Challis G.L."/>
            <person name="Yaxley A.M."/>
            <person name="Harris D."/>
            <person name="Seeger K."/>
            <person name="Murphy L."/>
            <person name="Rutter S."/>
            <person name="Squares R."/>
            <person name="Quail M.A."/>
            <person name="Saunders E."/>
            <person name="Mavromatis K."/>
            <person name="Brettin T.S."/>
            <person name="Bentley S.D."/>
            <person name="Hothersall J."/>
            <person name="Stephens E."/>
            <person name="Thomas C.M."/>
            <person name="Parkhill J."/>
            <person name="Levy S.B."/>
            <person name="Rainey P.B."/>
            <person name="Thomson N.R."/>
        </authorList>
    </citation>
    <scope>NUCLEOTIDE SEQUENCE [LARGE SCALE GENOMIC DNA]</scope>
    <source>
        <strain>Pf0-1</strain>
    </source>
</reference>
<proteinExistence type="inferred from homology"/>
<comment type="function">
    <text evidence="1">ATPase subunit of a proteasome-like degradation complex; this subunit has chaperone activity. The binding of ATP and its subsequent hydrolysis by HslU are essential for unfolding of protein substrates subsequently hydrolyzed by HslV. HslU recognizes the N-terminal part of its protein substrates and unfolds these before they are guided to HslV for hydrolysis.</text>
</comment>
<comment type="subunit">
    <text evidence="1">A double ring-shaped homohexamer of HslV is capped on each side by a ring-shaped HslU homohexamer. The assembly of the HslU/HslV complex is dependent on binding of ATP.</text>
</comment>
<comment type="subcellular location">
    <subcellularLocation>
        <location evidence="1">Cytoplasm</location>
    </subcellularLocation>
</comment>
<comment type="similarity">
    <text evidence="1">Belongs to the ClpX chaperone family. HslU subfamily.</text>
</comment>
<protein>
    <recommendedName>
        <fullName evidence="1">ATP-dependent protease ATPase subunit HslU</fullName>
    </recommendedName>
    <alternativeName>
        <fullName evidence="1">Unfoldase HslU</fullName>
    </alternativeName>
</protein>
<accession>Q3KJB6</accession>
<gene>
    <name evidence="1" type="primary">hslU</name>
    <name type="ordered locus">Pfl01_0396</name>
</gene>
<dbReference type="EMBL" id="CP000094">
    <property type="protein sequence ID" value="ABA72140.1"/>
    <property type="molecule type" value="Genomic_DNA"/>
</dbReference>
<dbReference type="RefSeq" id="WP_007952406.1">
    <property type="nucleotide sequence ID" value="NC_007492.2"/>
</dbReference>
<dbReference type="SMR" id="Q3KJB6"/>
<dbReference type="KEGG" id="pfo:Pfl01_0396"/>
<dbReference type="eggNOG" id="COG1220">
    <property type="taxonomic scope" value="Bacteria"/>
</dbReference>
<dbReference type="HOGENOM" id="CLU_033123_0_0_6"/>
<dbReference type="Proteomes" id="UP000002704">
    <property type="component" value="Chromosome"/>
</dbReference>
<dbReference type="GO" id="GO:0009376">
    <property type="term" value="C:HslUV protease complex"/>
    <property type="evidence" value="ECO:0007669"/>
    <property type="project" value="UniProtKB-UniRule"/>
</dbReference>
<dbReference type="GO" id="GO:0005524">
    <property type="term" value="F:ATP binding"/>
    <property type="evidence" value="ECO:0007669"/>
    <property type="project" value="UniProtKB-UniRule"/>
</dbReference>
<dbReference type="GO" id="GO:0016887">
    <property type="term" value="F:ATP hydrolysis activity"/>
    <property type="evidence" value="ECO:0007669"/>
    <property type="project" value="InterPro"/>
</dbReference>
<dbReference type="GO" id="GO:0008233">
    <property type="term" value="F:peptidase activity"/>
    <property type="evidence" value="ECO:0007669"/>
    <property type="project" value="InterPro"/>
</dbReference>
<dbReference type="GO" id="GO:0036402">
    <property type="term" value="F:proteasome-activating activity"/>
    <property type="evidence" value="ECO:0007669"/>
    <property type="project" value="UniProtKB-UniRule"/>
</dbReference>
<dbReference type="GO" id="GO:0043335">
    <property type="term" value="P:protein unfolding"/>
    <property type="evidence" value="ECO:0007669"/>
    <property type="project" value="UniProtKB-UniRule"/>
</dbReference>
<dbReference type="GO" id="GO:0051603">
    <property type="term" value="P:proteolysis involved in protein catabolic process"/>
    <property type="evidence" value="ECO:0007669"/>
    <property type="project" value="TreeGrafter"/>
</dbReference>
<dbReference type="CDD" id="cd19498">
    <property type="entry name" value="RecA-like_HslU"/>
    <property type="match status" value="1"/>
</dbReference>
<dbReference type="FunFam" id="1.10.8.10:FF:000028">
    <property type="entry name" value="ATP-dependent protease ATPase subunit HslU"/>
    <property type="match status" value="1"/>
</dbReference>
<dbReference type="FunFam" id="3.40.50.300:FF:000213">
    <property type="entry name" value="ATP-dependent protease ATPase subunit HslU"/>
    <property type="match status" value="1"/>
</dbReference>
<dbReference type="FunFam" id="3.40.50.300:FF:000220">
    <property type="entry name" value="ATP-dependent protease ATPase subunit HslU"/>
    <property type="match status" value="1"/>
</dbReference>
<dbReference type="Gene3D" id="1.10.8.60">
    <property type="match status" value="1"/>
</dbReference>
<dbReference type="Gene3D" id="1.10.8.10">
    <property type="entry name" value="DNA helicase RuvA subunit, C-terminal domain"/>
    <property type="match status" value="1"/>
</dbReference>
<dbReference type="Gene3D" id="3.40.50.300">
    <property type="entry name" value="P-loop containing nucleotide triphosphate hydrolases"/>
    <property type="match status" value="2"/>
</dbReference>
<dbReference type="HAMAP" id="MF_00249">
    <property type="entry name" value="HslU"/>
    <property type="match status" value="1"/>
</dbReference>
<dbReference type="InterPro" id="IPR003593">
    <property type="entry name" value="AAA+_ATPase"/>
</dbReference>
<dbReference type="InterPro" id="IPR050052">
    <property type="entry name" value="ATP-dep_Clp_protease_ClpX"/>
</dbReference>
<dbReference type="InterPro" id="IPR003959">
    <property type="entry name" value="ATPase_AAA_core"/>
</dbReference>
<dbReference type="InterPro" id="IPR019489">
    <property type="entry name" value="Clp_ATPase_C"/>
</dbReference>
<dbReference type="InterPro" id="IPR004491">
    <property type="entry name" value="HslU"/>
</dbReference>
<dbReference type="InterPro" id="IPR027417">
    <property type="entry name" value="P-loop_NTPase"/>
</dbReference>
<dbReference type="NCBIfam" id="TIGR00390">
    <property type="entry name" value="hslU"/>
    <property type="match status" value="1"/>
</dbReference>
<dbReference type="NCBIfam" id="NF003544">
    <property type="entry name" value="PRK05201.1"/>
    <property type="match status" value="1"/>
</dbReference>
<dbReference type="PANTHER" id="PTHR48102">
    <property type="entry name" value="ATP-DEPENDENT CLP PROTEASE ATP-BINDING SUBUNIT CLPX-LIKE, MITOCHONDRIAL-RELATED"/>
    <property type="match status" value="1"/>
</dbReference>
<dbReference type="PANTHER" id="PTHR48102:SF3">
    <property type="entry name" value="ATP-DEPENDENT PROTEASE ATPASE SUBUNIT HSLU"/>
    <property type="match status" value="1"/>
</dbReference>
<dbReference type="Pfam" id="PF00004">
    <property type="entry name" value="AAA"/>
    <property type="match status" value="1"/>
</dbReference>
<dbReference type="Pfam" id="PF07724">
    <property type="entry name" value="AAA_2"/>
    <property type="match status" value="1"/>
</dbReference>
<dbReference type="SMART" id="SM00382">
    <property type="entry name" value="AAA"/>
    <property type="match status" value="1"/>
</dbReference>
<dbReference type="SMART" id="SM01086">
    <property type="entry name" value="ClpB_D2-small"/>
    <property type="match status" value="1"/>
</dbReference>
<dbReference type="SUPFAM" id="SSF52540">
    <property type="entry name" value="P-loop containing nucleoside triphosphate hydrolases"/>
    <property type="match status" value="1"/>
</dbReference>
<organism>
    <name type="scientific">Pseudomonas fluorescens (strain Pf0-1)</name>
    <dbReference type="NCBI Taxonomy" id="205922"/>
    <lineage>
        <taxon>Bacteria</taxon>
        <taxon>Pseudomonadati</taxon>
        <taxon>Pseudomonadota</taxon>
        <taxon>Gammaproteobacteria</taxon>
        <taxon>Pseudomonadales</taxon>
        <taxon>Pseudomonadaceae</taxon>
        <taxon>Pseudomonas</taxon>
    </lineage>
</organism>
<name>HSLU_PSEPF</name>